<gene>
    <name type="primary">gag</name>
</gene>
<name>GAG_MSVMO</name>
<dbReference type="EMBL" id="J02266">
    <property type="protein sequence ID" value="AAA46499.1"/>
    <property type="molecule type" value="Genomic_RNA"/>
</dbReference>
<dbReference type="EMBL" id="V01185">
    <property type="protein sequence ID" value="CAA24507.1"/>
    <property type="molecule type" value="Genomic_DNA"/>
</dbReference>
<dbReference type="PIR" id="A94261">
    <property type="entry name" value="FOMVM"/>
</dbReference>
<dbReference type="RefSeq" id="NP_057858.1">
    <property type="nucleotide sequence ID" value="NC_001502.1"/>
</dbReference>
<dbReference type="BMRB" id="P03334"/>
<dbReference type="SMR" id="P03334"/>
<dbReference type="ELM" id="P03334"/>
<dbReference type="iPTMnet" id="P03334"/>
<dbReference type="GeneID" id="1491884"/>
<dbReference type="KEGG" id="vg:1491884"/>
<dbReference type="OrthoDB" id="3221at10239"/>
<dbReference type="Proteomes" id="UP000108184">
    <property type="component" value="Genome"/>
</dbReference>
<dbReference type="GO" id="GO:0020002">
    <property type="term" value="C:host cell plasma membrane"/>
    <property type="evidence" value="ECO:0007669"/>
    <property type="project" value="UniProtKB-SubCell"/>
</dbReference>
<dbReference type="GO" id="GO:0016020">
    <property type="term" value="C:membrane"/>
    <property type="evidence" value="ECO:0007669"/>
    <property type="project" value="UniProtKB-KW"/>
</dbReference>
<dbReference type="GO" id="GO:0019013">
    <property type="term" value="C:viral nucleocapsid"/>
    <property type="evidence" value="ECO:0007669"/>
    <property type="project" value="UniProtKB-KW"/>
</dbReference>
<dbReference type="GO" id="GO:0003676">
    <property type="term" value="F:nucleic acid binding"/>
    <property type="evidence" value="ECO:0007669"/>
    <property type="project" value="InterPro"/>
</dbReference>
<dbReference type="GO" id="GO:0039660">
    <property type="term" value="F:structural constituent of virion"/>
    <property type="evidence" value="ECO:0007669"/>
    <property type="project" value="UniProtKB-KW"/>
</dbReference>
<dbReference type="GO" id="GO:0008270">
    <property type="term" value="F:zinc ion binding"/>
    <property type="evidence" value="ECO:0007669"/>
    <property type="project" value="UniProtKB-KW"/>
</dbReference>
<dbReference type="GO" id="GO:0039702">
    <property type="term" value="P:viral budding via host ESCRT complex"/>
    <property type="evidence" value="ECO:0007669"/>
    <property type="project" value="UniProtKB-KW"/>
</dbReference>
<dbReference type="FunFam" id="1.10.150.180:FF:000001">
    <property type="entry name" value="Gag polyprotein"/>
    <property type="match status" value="1"/>
</dbReference>
<dbReference type="Gene3D" id="1.10.150.180">
    <property type="entry name" value="Gamma-retroviral matrix domain"/>
    <property type="match status" value="1"/>
</dbReference>
<dbReference type="Gene3D" id="1.10.375.10">
    <property type="entry name" value="Human Immunodeficiency Virus Type 1 Capsid Protein"/>
    <property type="match status" value="1"/>
</dbReference>
<dbReference type="Gene3D" id="4.10.60.10">
    <property type="entry name" value="Zinc finger, CCHC-type"/>
    <property type="match status" value="1"/>
</dbReference>
<dbReference type="InterPro" id="IPR000840">
    <property type="entry name" value="G_retro_matrix"/>
</dbReference>
<dbReference type="InterPro" id="IPR036946">
    <property type="entry name" value="G_retro_matrix_sf"/>
</dbReference>
<dbReference type="InterPro" id="IPR002079">
    <property type="entry name" value="Gag_p12"/>
</dbReference>
<dbReference type="InterPro" id="IPR003036">
    <property type="entry name" value="Gag_P30"/>
</dbReference>
<dbReference type="InterPro" id="IPR008919">
    <property type="entry name" value="Retrov_capsid_N"/>
</dbReference>
<dbReference type="InterPro" id="IPR050462">
    <property type="entry name" value="Retroviral_Gag-Pol_poly"/>
</dbReference>
<dbReference type="InterPro" id="IPR010999">
    <property type="entry name" value="Retrovr_matrix"/>
</dbReference>
<dbReference type="InterPro" id="IPR001878">
    <property type="entry name" value="Znf_CCHC"/>
</dbReference>
<dbReference type="InterPro" id="IPR036875">
    <property type="entry name" value="Znf_CCHC_sf"/>
</dbReference>
<dbReference type="PANTHER" id="PTHR33166">
    <property type="entry name" value="GAG_P30 DOMAIN-CONTAINING PROTEIN"/>
    <property type="match status" value="1"/>
</dbReference>
<dbReference type="Pfam" id="PF01140">
    <property type="entry name" value="Gag_MA"/>
    <property type="match status" value="1"/>
</dbReference>
<dbReference type="Pfam" id="PF01141">
    <property type="entry name" value="Gag_p12"/>
    <property type="match status" value="1"/>
</dbReference>
<dbReference type="Pfam" id="PF02093">
    <property type="entry name" value="Gag_p30"/>
    <property type="match status" value="1"/>
</dbReference>
<dbReference type="Pfam" id="PF00098">
    <property type="entry name" value="zf-CCHC"/>
    <property type="match status" value="1"/>
</dbReference>
<dbReference type="SMART" id="SM00343">
    <property type="entry name" value="ZnF_C2HC"/>
    <property type="match status" value="1"/>
</dbReference>
<dbReference type="SUPFAM" id="SSF47836">
    <property type="entry name" value="Retroviral matrix proteins"/>
    <property type="match status" value="1"/>
</dbReference>
<dbReference type="SUPFAM" id="SSF47943">
    <property type="entry name" value="Retrovirus capsid protein, N-terminal core domain"/>
    <property type="match status" value="1"/>
</dbReference>
<dbReference type="SUPFAM" id="SSF57756">
    <property type="entry name" value="Retrovirus zinc finger-like domains"/>
    <property type="match status" value="1"/>
</dbReference>
<dbReference type="PROSITE" id="PS50158">
    <property type="entry name" value="ZF_CCHC"/>
    <property type="match status" value="1"/>
</dbReference>
<accession>P03334</accession>
<keyword id="KW-0167">Capsid protein</keyword>
<keyword id="KW-0903">Direct protein sequencing</keyword>
<keyword id="KW-1032">Host cell membrane</keyword>
<keyword id="KW-1043">Host membrane</keyword>
<keyword id="KW-0945">Host-virus interaction</keyword>
<keyword id="KW-0449">Lipoprotein</keyword>
<keyword id="KW-0472">Membrane</keyword>
<keyword id="KW-0479">Metal-binding</keyword>
<keyword id="KW-0519">Myristate</keyword>
<keyword id="KW-1198">Viral budding</keyword>
<keyword id="KW-1187">Viral budding via the host ESCRT complexes</keyword>
<keyword id="KW-0468">Viral matrix protein</keyword>
<keyword id="KW-0543">Viral nucleoprotein</keyword>
<keyword id="KW-1188">Viral release from host cell</keyword>
<keyword id="KW-0946">Virion</keyword>
<keyword id="KW-0862">Zinc</keyword>
<keyword id="KW-0863">Zinc-finger</keyword>
<feature type="initiator methionine" description="Removed; by host" evidence="1">
    <location>
        <position position="1"/>
    </location>
</feature>
<feature type="chain" id="PRO_0000390818" description="Gag polyprotein">
    <location>
        <begin position="2"/>
        <end position="538"/>
    </location>
</feature>
<feature type="chain" id="PRO_0000040949" description="Matrix protein p15" evidence="4">
    <location>
        <begin position="2"/>
        <end position="131"/>
    </location>
</feature>
<feature type="chain" id="PRO_0000040950" description="RNA-binding phosphoprotein p12" evidence="4">
    <location>
        <begin position="132"/>
        <end position="215"/>
    </location>
</feature>
<feature type="chain" id="PRO_0000040951" description="Capsid protein p30" evidence="4">
    <location>
        <begin position="216"/>
        <end position="478"/>
    </location>
</feature>
<feature type="chain" id="PRO_0000040952" description="Nucleocapsid protein p10-gag" evidence="4">
    <location>
        <begin position="479"/>
        <end position="538"/>
    </location>
</feature>
<feature type="zinc finger region" description="CCHC-type" evidence="5">
    <location>
        <begin position="502"/>
        <end position="519"/>
    </location>
</feature>
<feature type="region of interest" description="Disordered" evidence="6">
    <location>
        <begin position="111"/>
        <end position="222"/>
    </location>
</feature>
<feature type="region of interest" description="Disordered" evidence="6">
    <location>
        <begin position="435"/>
        <end position="499"/>
    </location>
</feature>
<feature type="region of interest" description="Disordered" evidence="6">
    <location>
        <begin position="513"/>
        <end position="538"/>
    </location>
</feature>
<feature type="short sequence motif" description="PTAP/PSAP motif">
    <location>
        <begin position="111"/>
        <end position="114"/>
    </location>
</feature>
<feature type="short sequence motif" description="LYPX(n)L motif">
    <location>
        <begin position="130"/>
        <end position="134"/>
    </location>
</feature>
<feature type="short sequence motif" description="PPXY motif">
    <location>
        <begin position="162"/>
        <end position="165"/>
    </location>
</feature>
<feature type="compositionally biased region" description="Basic and acidic residues" evidence="6">
    <location>
        <begin position="163"/>
        <end position="178"/>
    </location>
</feature>
<feature type="compositionally biased region" description="Basic and acidic residues" evidence="6">
    <location>
        <begin position="435"/>
        <end position="466"/>
    </location>
</feature>
<feature type="compositionally biased region" description="Basic and acidic residues" evidence="6">
    <location>
        <begin position="486"/>
        <end position="499"/>
    </location>
</feature>
<feature type="site" description="Cleavage; by viral protease" evidence="1">
    <location>
        <begin position="131"/>
        <end position="132"/>
    </location>
</feature>
<feature type="site" description="Cleavage; by viral protease" evidence="1">
    <location>
        <begin position="215"/>
        <end position="216"/>
    </location>
</feature>
<feature type="site" description="Cleavage; by viral protease" evidence="1">
    <location>
        <begin position="478"/>
        <end position="479"/>
    </location>
</feature>
<feature type="lipid moiety-binding region" description="N-myristoyl glycine; by host" evidence="7">
    <location>
        <position position="2"/>
    </location>
</feature>
<feature type="sequence variant" description="In clone 124.">
    <original>R</original>
    <variation>K</variation>
    <location>
        <position position="519"/>
    </location>
</feature>
<reference key="1">
    <citation type="journal article" date="1981" name="Science">
        <title>Complete nucleotide sequence and organization of the Moloney murine sarcoma virus genome.</title>
        <authorList>
            <person name="Reddy E.P."/>
            <person name="Smith M.J."/>
            <person name="Aaronson S.A."/>
        </authorList>
    </citation>
    <scope>NUCLEOTIDE SEQUENCE [GENOMIC DNA] (PROVIRUS)</scope>
</reference>
<reference key="2">
    <citation type="journal article" date="1981" name="Cell">
        <title>Nucleotide sequence of the genome of a murine sarcoma virus.</title>
        <authorList>
            <person name="van Beveren C."/>
            <person name="van Straaten F."/>
            <person name="Galleshaw J.A."/>
            <person name="Verma I.M."/>
        </authorList>
    </citation>
    <scope>NUCLEOTIDE SEQUENCE [GENOMIC DNA] (CLONE 124 CIRCULAR)</scope>
</reference>
<reference key="3">
    <citation type="journal article" date="1983" name="Proc. Natl. Acad. Sci. U.S.A.">
        <title>Myristyl amino-terminal acylation of murine retrovirus proteins: an unusual post-translational proteins modification.</title>
        <authorList>
            <person name="Henderson L.E."/>
            <person name="Krutzsch H.C."/>
            <person name="Oroszlan S."/>
        </authorList>
    </citation>
    <scope>PROTEIN SEQUENCE OF 2-17</scope>
    <scope>MYRISTOYLATION AT GLY-2</scope>
</reference>
<sequence length="538" mass="61209">MGQTVTTPLSLTLDHWKDVERLAHNQSVDVKKRRWVTFCSAEWPTFNVGWPRDGTFNRDLITQVKIKVFSPGPHGHPDQVPYIVTWEALAFDPPPWVKPFVHPKPPPPLLPSAPSLPLEPPLSTPPQSSLYPALTPSLGAKPKPQVLSDSGGPLIDLLTEDPPPYRDPRPPPSDRDGDSGEATPAGEAPDPSPMASRLRGRREPPVADSTTSQAFPLRTGGNGQLQYWPFSSSDLYNWKNNNPSFSEDPGKLTALIESVLITHQPTWDDCQQLLGTLLTGEEKQRVLLEARKAVRGDDGRPTQLPNEVDAAFPLERPDWEYTTQAGRNHLVHYRQLLIAGLQNAGRSPTNLAKVKGITQGPNESPSAFLERLKEAYRRYTPYDPEDPGQETNVSMSFIWQSAPDIGRKLERLEDLRNKTLGDLVREAERIFNKRETPEEREERIRREREEKEERRRTEDEQKEKERDRRRHREMSRLLATVVSGQRQDRQEGERRRSQLDCDQCTYCEEQGHWAKDCPRRPRGPRGPRPQTSLLTLDD</sequence>
<organism>
    <name type="scientific">Moloney murine sarcoma virus</name>
    <name type="common">MoMSV</name>
    <dbReference type="NCBI Taxonomy" id="11809"/>
    <lineage>
        <taxon>Viruses</taxon>
        <taxon>Riboviria</taxon>
        <taxon>Pararnavirae</taxon>
        <taxon>Artverviricota</taxon>
        <taxon>Revtraviricetes</taxon>
        <taxon>Ortervirales</taxon>
        <taxon>Retroviridae</taxon>
        <taxon>Orthoretrovirinae</taxon>
        <taxon>Gammaretrovirus</taxon>
    </lineage>
</organism>
<protein>
    <recommendedName>
        <fullName>Gag polyprotein</fullName>
    </recommendedName>
    <alternativeName>
        <fullName>Core polyprotein</fullName>
    </alternativeName>
    <component>
        <recommendedName>
            <fullName>Matrix protein p15</fullName>
            <shortName>MA</shortName>
        </recommendedName>
    </component>
    <component>
        <recommendedName>
            <fullName>RNA-binding phosphoprotein p12</fullName>
        </recommendedName>
        <alternativeName>
            <fullName>pp12</fullName>
        </alternativeName>
    </component>
    <component>
        <recommendedName>
            <fullName>Capsid protein p30</fullName>
            <shortName>CA</shortName>
        </recommendedName>
    </component>
    <component>
        <recommendedName>
            <fullName>Nucleocapsid protein p10-gag</fullName>
            <shortName>NC-gag</shortName>
        </recommendedName>
    </component>
</protein>
<evidence type="ECO:0000250" key="1"/>
<evidence type="ECO:0000250" key="2">
    <source>
        <dbReference type="UniProtKB" id="P03332"/>
    </source>
</evidence>
<evidence type="ECO:0000250" key="3">
    <source>
        <dbReference type="UniProtKB" id="P03336"/>
    </source>
</evidence>
<evidence type="ECO:0000255" key="4"/>
<evidence type="ECO:0000255" key="5">
    <source>
        <dbReference type="PROSITE-ProRule" id="PRU00047"/>
    </source>
</evidence>
<evidence type="ECO:0000256" key="6">
    <source>
        <dbReference type="SAM" id="MobiDB-lite"/>
    </source>
</evidence>
<evidence type="ECO:0000269" key="7">
    <source>
    </source>
</evidence>
<evidence type="ECO:0000305" key="8"/>
<comment type="function">
    <molecule>Gag polyprotein</molecule>
    <text evidence="2">Plays a role in budding and is processed by the viral protease during virion maturation outside the cell. During budding, it recruits, in a PPXY-dependent or independent manner, Nedd4-like ubiquitin ligases that conjugate ubiquitin molecules to Gag, or to Gag binding host factors. Interaction with HECT ubiquitin ligases probably links the viral protein to the host ESCRT pathway and facilitates release.</text>
</comment>
<comment type="function">
    <molecule>Matrix protein p15</molecule>
    <text evidence="2">Targets Gag and gag-pol polyproteins to the plasma membrane via a multipartite membrane binding signal, that includes its myristoylated N-terminus. Also mediates nuclear localization of the pre-integration complex.</text>
</comment>
<comment type="function">
    <molecule>RNA-binding phosphoprotein p12</molecule>
    <text evidence="2">Constituent of the pre-integration complex (PIC) which tethers the latter to mitotic chromosomes.</text>
</comment>
<comment type="function">
    <molecule>Capsid protein p30</molecule>
    <text evidence="2">Forms the spherical core of the virion that encapsulates the genomic RNA-nucleocapsid complex.</text>
</comment>
<comment type="function">
    <molecule>Nucleocapsid protein p10-gag</molecule>
    <text evidence="2">Involved in the packaging and encapsidation of two copies of the genome. Binds with high affinity to conserved UCUG elements within the packaging signal, located near the 5'-end of the genome. This binding is dependent on genome dimerization.</text>
</comment>
<comment type="subunit">
    <molecule>Gag polyprotein</molecule>
    <text evidence="2">Interacts (via PPXY motif) with host NEDD4 (By similarity). Interacts (via PSAP motif) with host TSG101 (By similarity). Interacts (via LYPX(n)L motif) with host PDCD6IP (By similarity).</text>
</comment>
<comment type="subunit">
    <molecule>Capsid protein p30</molecule>
    <text evidence="2 3">Homohexamer. Further associates as homomultimer (By similarity). The virus core is composed of a lattice formed from hexagonal rings, each containing six capsid monomers (By similarity). Interacts with mouse UBE2I and mouse PIAS4 (By similarity).</text>
</comment>
<comment type="subcellular location">
    <molecule>Gag polyprotein</molecule>
    <subcellularLocation>
        <location evidence="1">Virion</location>
    </subcellularLocation>
    <subcellularLocation>
        <location evidence="8">Host cell membrane</location>
        <topology evidence="8">Lipid-anchor</topology>
    </subcellularLocation>
</comment>
<comment type="subcellular location">
    <molecule>Matrix protein p15</molecule>
    <subcellularLocation>
        <location evidence="8">Virion</location>
    </subcellularLocation>
</comment>
<comment type="subcellular location">
    <molecule>Capsid protein p30</molecule>
    <subcellularLocation>
        <location evidence="8">Virion</location>
    </subcellularLocation>
</comment>
<comment type="domain">
    <molecule>Gag polyprotein</molecule>
    <text evidence="2">Late-budding domains (L domains) are short sequence motifs essential for viral particle budding. They recruit proteins of the host ESCRT machinery (Endosomal Sorting Complex Required for Transport) or ESCRT-associated proteins. RNA-binding phosphoprotein p12 contains one L domain: a PPXY motif which interacts with the WW domain 3 of NEDD4 E3 ubiquitin ligase. PPXY motif is essential for virus egress. Matrix protein p15 contains one L domain: a PTAP/PSAP motif, which interacts with the UEV domain of TSG101. The junction between the matrix protein p15 and RNA-binding phosphoprotein p12 also contains one L domain: a LYPX(n)L motif which interacts with PDCD6IP. Both PSAP and LYPX(n)L domains might play little to no role in budding and possibly drive residual virus release.</text>
</comment>
<comment type="PTM">
    <molecule>Gag polyprotein</molecule>
    <text evidence="2">Specific enzymatic cleavages by the viral protease yield mature proteins. The protease is released by autocatalytic cleavage. The polyprotein is cleaved during and after budding, this process is termed maturation.</text>
</comment>
<organismHost>
    <name type="scientific">Mus musculus</name>
    <name type="common">Mouse</name>
    <dbReference type="NCBI Taxonomy" id="10090"/>
</organismHost>
<proteinExistence type="evidence at protein level"/>